<name>ADH1_YEAST</name>
<dbReference type="EC" id="1.1.1.1" evidence="12"/>
<dbReference type="EC" id="1.1.1.54" evidence="19"/>
<dbReference type="EC" id="1.1.1.78" evidence="1"/>
<dbReference type="EMBL" id="V01292">
    <property type="protein sequence ID" value="CAA24601.1"/>
    <property type="molecule type" value="Genomic_DNA"/>
</dbReference>
<dbReference type="EMBL" id="M38456">
    <property type="protein sequence ID" value="AAA34410.1"/>
    <property type="molecule type" value="Genomic_DNA"/>
</dbReference>
<dbReference type="EMBL" id="X83121">
    <property type="protein sequence ID" value="CAA58193.1"/>
    <property type="molecule type" value="Genomic_DNA"/>
</dbReference>
<dbReference type="EMBL" id="Z74828">
    <property type="protein sequence ID" value="CAA99098.1"/>
    <property type="molecule type" value="Genomic_DNA"/>
</dbReference>
<dbReference type="EMBL" id="V01291">
    <property type="protein sequence ID" value="CAA24600.1"/>
    <property type="molecule type" value="Genomic_DNA"/>
</dbReference>
<dbReference type="EMBL" id="BK006948">
    <property type="protein sequence ID" value="DAA10699.1"/>
    <property type="molecule type" value="Genomic_DNA"/>
</dbReference>
<dbReference type="PIR" id="S57383">
    <property type="entry name" value="DEBYA"/>
</dbReference>
<dbReference type="RefSeq" id="NP_014555.1">
    <property type="nucleotide sequence ID" value="NM_001183340.1"/>
</dbReference>
<dbReference type="PDB" id="4W6Z">
    <property type="method" value="X-ray"/>
    <property type="resolution" value="2.40 A"/>
    <property type="chains" value="A/B/C/D=2-348"/>
</dbReference>
<dbReference type="PDB" id="5ENV">
    <property type="method" value="X-ray"/>
    <property type="resolution" value="3.00 A"/>
    <property type="chains" value="A/B=2-348"/>
</dbReference>
<dbReference type="PDB" id="7KCB">
    <property type="method" value="EM"/>
    <property type="resolution" value="2.77 A"/>
    <property type="chains" value="A/B/C/D=2-348"/>
</dbReference>
<dbReference type="PDB" id="7NTM">
    <property type="method" value="EM"/>
    <property type="resolution" value="2.86 A"/>
    <property type="chains" value="A/B/C/D=2-348"/>
</dbReference>
<dbReference type="PDBsum" id="4W6Z"/>
<dbReference type="PDBsum" id="5ENV"/>
<dbReference type="PDBsum" id="7KCB"/>
<dbReference type="PDBsum" id="7NTM"/>
<dbReference type="EMDB" id="EMD-12591"/>
<dbReference type="SASBDB" id="P00330"/>
<dbReference type="SMR" id="P00330"/>
<dbReference type="BioGRID" id="34317">
    <property type="interactions" value="272"/>
</dbReference>
<dbReference type="DIP" id="DIP-1143N"/>
<dbReference type="FunCoup" id="P00330">
    <property type="interactions" value="1107"/>
</dbReference>
<dbReference type="IntAct" id="P00330">
    <property type="interactions" value="218"/>
</dbReference>
<dbReference type="MINT" id="P00330"/>
<dbReference type="STRING" id="4932.YOL086C"/>
<dbReference type="MoonDB" id="P00330">
    <property type="type" value="Curated"/>
</dbReference>
<dbReference type="iPTMnet" id="P00330"/>
<dbReference type="SwissPalm" id="P00330"/>
<dbReference type="PaxDb" id="4932-YOL086C"/>
<dbReference type="PeptideAtlas" id="P00330"/>
<dbReference type="TopDownProteomics" id="P00330"/>
<dbReference type="EnsemblFungi" id="YOL086C_mRNA">
    <property type="protein sequence ID" value="YOL086C"/>
    <property type="gene ID" value="YOL086C"/>
</dbReference>
<dbReference type="GeneID" id="854068"/>
<dbReference type="KEGG" id="sce:YOL086C"/>
<dbReference type="AGR" id="SGD:S000005446"/>
<dbReference type="SGD" id="S000005446">
    <property type="gene designation" value="ADH1"/>
</dbReference>
<dbReference type="VEuPathDB" id="FungiDB:YOL086C"/>
<dbReference type="eggNOG" id="KOG0023">
    <property type="taxonomic scope" value="Eukaryota"/>
</dbReference>
<dbReference type="GeneTree" id="ENSGT00940000171159"/>
<dbReference type="HOGENOM" id="CLU_026673_20_1_1"/>
<dbReference type="InParanoid" id="P00330"/>
<dbReference type="OMA" id="LMAGHWV"/>
<dbReference type="OrthoDB" id="1879366at2759"/>
<dbReference type="BioCyc" id="MetaCyc:YOL086C-MONOMER"/>
<dbReference type="BioCyc" id="YEAST:YOL086C-MONOMER"/>
<dbReference type="BRENDA" id="1.1.1.1">
    <property type="organism ID" value="984"/>
</dbReference>
<dbReference type="SABIO-RK" id="P00330"/>
<dbReference type="BioGRID-ORCS" id="854068">
    <property type="hits" value="0 hits in 10 CRISPR screens"/>
</dbReference>
<dbReference type="EvolutionaryTrace" id="P00330"/>
<dbReference type="PRO" id="PR:P00330"/>
<dbReference type="Proteomes" id="UP000002311">
    <property type="component" value="Chromosome XV"/>
</dbReference>
<dbReference type="RNAct" id="P00330">
    <property type="molecule type" value="protein"/>
</dbReference>
<dbReference type="GO" id="GO:0005737">
    <property type="term" value="C:cytoplasm"/>
    <property type="evidence" value="ECO:0000314"/>
    <property type="project" value="SGD"/>
</dbReference>
<dbReference type="GO" id="GO:0005886">
    <property type="term" value="C:plasma membrane"/>
    <property type="evidence" value="ECO:0007005"/>
    <property type="project" value="SGD"/>
</dbReference>
<dbReference type="GO" id="GO:0004022">
    <property type="term" value="F:alcohol dehydrogenase (NAD+) activity"/>
    <property type="evidence" value="ECO:0000314"/>
    <property type="project" value="SGD"/>
</dbReference>
<dbReference type="GO" id="GO:0047655">
    <property type="term" value="F:allyl-alcohol dehydrogenase activity"/>
    <property type="evidence" value="ECO:0007669"/>
    <property type="project" value="RHEA"/>
</dbReference>
<dbReference type="GO" id="GO:1990362">
    <property type="term" value="F:butanol dehydrogenase (NAD+) activity"/>
    <property type="evidence" value="ECO:0007669"/>
    <property type="project" value="RHEA"/>
</dbReference>
<dbReference type="GO" id="GO:0120542">
    <property type="term" value="F:ethanol dehydrogenase (NAD+) activity"/>
    <property type="evidence" value="ECO:0007669"/>
    <property type="project" value="RHEA"/>
</dbReference>
<dbReference type="GO" id="GO:0042802">
    <property type="term" value="F:identical protein binding"/>
    <property type="evidence" value="ECO:0000353"/>
    <property type="project" value="IntAct"/>
</dbReference>
<dbReference type="GO" id="GO:1904408">
    <property type="term" value="F:melatonin binding"/>
    <property type="evidence" value="ECO:0000314"/>
    <property type="project" value="SGD"/>
</dbReference>
<dbReference type="GO" id="GO:0019170">
    <property type="term" value="F:methylglyoxal reductase (NADH) activity"/>
    <property type="evidence" value="ECO:0000314"/>
    <property type="project" value="SGD"/>
</dbReference>
<dbReference type="GO" id="GO:0004552">
    <property type="term" value="F:octanol dehydrogenase (NAD+) activity"/>
    <property type="evidence" value="ECO:0007669"/>
    <property type="project" value="RHEA"/>
</dbReference>
<dbReference type="GO" id="GO:0008270">
    <property type="term" value="F:zinc ion binding"/>
    <property type="evidence" value="ECO:0007669"/>
    <property type="project" value="InterPro"/>
</dbReference>
<dbReference type="GO" id="GO:0000947">
    <property type="term" value="P:amino acid catabolic process to alcohol via Ehrlich pathway"/>
    <property type="evidence" value="ECO:0000316"/>
    <property type="project" value="SGD"/>
</dbReference>
<dbReference type="GO" id="GO:0019655">
    <property type="term" value="P:glycolytic fermentation to ethanol"/>
    <property type="evidence" value="ECO:0000315"/>
    <property type="project" value="SGD"/>
</dbReference>
<dbReference type="CDD" id="cd08297">
    <property type="entry name" value="CAD3"/>
    <property type="match status" value="1"/>
</dbReference>
<dbReference type="FunFam" id="3.40.50.720:FF:000039">
    <property type="entry name" value="Alcohol dehydrogenase AdhP"/>
    <property type="match status" value="1"/>
</dbReference>
<dbReference type="FunFam" id="3.90.180.10:FF:000002">
    <property type="entry name" value="Alcohol dehydrogenase AdhP"/>
    <property type="match status" value="1"/>
</dbReference>
<dbReference type="Gene3D" id="3.90.180.10">
    <property type="entry name" value="Medium-chain alcohol dehydrogenases, catalytic domain"/>
    <property type="match status" value="1"/>
</dbReference>
<dbReference type="Gene3D" id="3.40.50.720">
    <property type="entry name" value="NAD(P)-binding Rossmann-like Domain"/>
    <property type="match status" value="1"/>
</dbReference>
<dbReference type="InterPro" id="IPR013149">
    <property type="entry name" value="ADH-like_C"/>
</dbReference>
<dbReference type="InterPro" id="IPR013154">
    <property type="entry name" value="ADH-like_N"/>
</dbReference>
<dbReference type="InterPro" id="IPR002328">
    <property type="entry name" value="ADH_Zn_CS"/>
</dbReference>
<dbReference type="InterPro" id="IPR011032">
    <property type="entry name" value="GroES-like_sf"/>
</dbReference>
<dbReference type="InterPro" id="IPR036291">
    <property type="entry name" value="NAD(P)-bd_dom_sf"/>
</dbReference>
<dbReference type="InterPro" id="IPR020843">
    <property type="entry name" value="PKS_ER"/>
</dbReference>
<dbReference type="PANTHER" id="PTHR42940">
    <property type="entry name" value="ALCOHOL DEHYDROGENASE 1-RELATED"/>
    <property type="match status" value="1"/>
</dbReference>
<dbReference type="PANTHER" id="PTHR42940:SF3">
    <property type="entry name" value="ALCOHOL DEHYDROGENASE 1-RELATED"/>
    <property type="match status" value="1"/>
</dbReference>
<dbReference type="Pfam" id="PF08240">
    <property type="entry name" value="ADH_N"/>
    <property type="match status" value="1"/>
</dbReference>
<dbReference type="Pfam" id="PF00107">
    <property type="entry name" value="ADH_zinc_N"/>
    <property type="match status" value="1"/>
</dbReference>
<dbReference type="SMART" id="SM00829">
    <property type="entry name" value="PKS_ER"/>
    <property type="match status" value="1"/>
</dbReference>
<dbReference type="SUPFAM" id="SSF50129">
    <property type="entry name" value="GroES-like"/>
    <property type="match status" value="1"/>
</dbReference>
<dbReference type="SUPFAM" id="SSF51735">
    <property type="entry name" value="NAD(P)-binding Rossmann-fold domains"/>
    <property type="match status" value="1"/>
</dbReference>
<dbReference type="PROSITE" id="PS00059">
    <property type="entry name" value="ADH_ZINC"/>
    <property type="match status" value="1"/>
</dbReference>
<sequence>MSIPETQKGVIFYESHGKLEYKDIPVPKPKANELLINVKYSGVCHTDLHAWHGDWPLPVKLPLVGGHEGAGVVVGMGENVKGWKIGDYAGIKWLNGSCMACEYCELGNESNCPHADLSGYTHDGSFQQYATADAVQAAHIPQGTDLAQVAPILCAGITVYKALKSANLMAGHWVAISGAAGGLGSLAVQYAKAMGYRVLGIDGGEGKEELFRSIGGEVFIDFTKEKDIVGAVLKATDGGAHGVINVSVSEAAIEASTRYVRANGTTVLVGMPAGAKCCSDVFNQVVKSISIVGSYVGNRADTREALDFFARGLVKSPIKVVGLSTLPEIYEKMEKGQIVGRYVVDTSK</sequence>
<reference key="1">
    <citation type="journal article" date="1982" name="J. Biol. Chem.">
        <title>The primary structure of the Saccharomyces cerevisiae gene for alcohol dehydrogenase.</title>
        <authorList>
            <person name="Bennetzen J.L."/>
            <person name="Hall B.D."/>
        </authorList>
    </citation>
    <scope>NUCLEOTIDE SEQUENCE [GENOMIC DNA]</scope>
</reference>
<reference key="2">
    <citation type="journal article" date="1982" name="Basic Life Sci.">
        <title>The alcohol dehydrogenase genes of the yeast, Saccharomyces cerevisiae: isolation, structure, and regulation.</title>
        <authorList>
            <person name="Young E.T."/>
            <person name="Williamson V.M."/>
            <person name="Taguchi A."/>
            <person name="Smith M."/>
            <person name="Sledziewski A."/>
            <person name="Russell D.W."/>
            <person name="Osterman J."/>
            <person name="Denis C."/>
            <person name="Cox D."/>
            <person name="Beier D."/>
        </authorList>
    </citation>
    <scope>NUCLEOTIDE SEQUENCE [GENOMIC DNA]</scope>
</reference>
<reference key="3">
    <citation type="journal article" date="1995" name="Yeast">
        <title>A 29.425 kb segment on the left arm of yeast chromosome XV contains more than twice as many unknown as known open reading frames.</title>
        <authorList>
            <person name="Zumstein E."/>
            <person name="Pearson B.M."/>
            <person name="Kalogeropoulos A."/>
            <person name="Schweizer M."/>
        </authorList>
    </citation>
    <scope>NUCLEOTIDE SEQUENCE [GENOMIC DNA]</scope>
    <source>
        <strain>ATCC 96604 / S288c / FY1679</strain>
    </source>
</reference>
<reference key="4">
    <citation type="journal article" date="1997" name="Nature">
        <title>The nucleotide sequence of Saccharomyces cerevisiae chromosome XV.</title>
        <authorList>
            <person name="Dujon B."/>
            <person name="Albermann K."/>
            <person name="Aldea M."/>
            <person name="Alexandraki D."/>
            <person name="Ansorge W."/>
            <person name="Arino J."/>
            <person name="Benes V."/>
            <person name="Bohn C."/>
            <person name="Bolotin-Fukuhara M."/>
            <person name="Bordonne R."/>
            <person name="Boyer J."/>
            <person name="Camasses A."/>
            <person name="Casamayor A."/>
            <person name="Casas C."/>
            <person name="Cheret G."/>
            <person name="Cziepluch C."/>
            <person name="Daignan-Fornier B."/>
            <person name="Dang V.-D."/>
            <person name="de Haan M."/>
            <person name="Delius H."/>
            <person name="Durand P."/>
            <person name="Fairhead C."/>
            <person name="Feldmann H."/>
            <person name="Gaillon L."/>
            <person name="Galisson F."/>
            <person name="Gamo F.-J."/>
            <person name="Gancedo C."/>
            <person name="Goffeau A."/>
            <person name="Goulding S.E."/>
            <person name="Grivell L.A."/>
            <person name="Habbig B."/>
            <person name="Hand N.J."/>
            <person name="Hani J."/>
            <person name="Hattenhorst U."/>
            <person name="Hebling U."/>
            <person name="Hernando Y."/>
            <person name="Herrero E."/>
            <person name="Heumann K."/>
            <person name="Hiesel R."/>
            <person name="Hilger F."/>
            <person name="Hofmann B."/>
            <person name="Hollenberg C.P."/>
            <person name="Hughes B."/>
            <person name="Jauniaux J.-C."/>
            <person name="Kalogeropoulos A."/>
            <person name="Katsoulou C."/>
            <person name="Kordes E."/>
            <person name="Lafuente M.J."/>
            <person name="Landt O."/>
            <person name="Louis E.J."/>
            <person name="Maarse A.C."/>
            <person name="Madania A."/>
            <person name="Mannhaupt G."/>
            <person name="Marck C."/>
            <person name="Martin R.P."/>
            <person name="Mewes H.-W."/>
            <person name="Michaux G."/>
            <person name="Paces V."/>
            <person name="Parle-McDermott A.G."/>
            <person name="Pearson B.M."/>
            <person name="Perrin A."/>
            <person name="Pettersson B."/>
            <person name="Poch O."/>
            <person name="Pohl T.M."/>
            <person name="Poirey R."/>
            <person name="Portetelle D."/>
            <person name="Pujol A."/>
            <person name="Purnelle B."/>
            <person name="Ramezani Rad M."/>
            <person name="Rechmann S."/>
            <person name="Schwager C."/>
            <person name="Schweizer M."/>
            <person name="Sor F."/>
            <person name="Sterky F."/>
            <person name="Tarassov I.A."/>
            <person name="Teodoru C."/>
            <person name="Tettelin H."/>
            <person name="Thierry A."/>
            <person name="Tobiasch E."/>
            <person name="Tzermia M."/>
            <person name="Uhlen M."/>
            <person name="Unseld M."/>
            <person name="Valens M."/>
            <person name="Vandenbol M."/>
            <person name="Vetter I."/>
            <person name="Vlcek C."/>
            <person name="Voet M."/>
            <person name="Volckaert G."/>
            <person name="Voss H."/>
            <person name="Wambutt R."/>
            <person name="Wedler H."/>
            <person name="Wiemann S."/>
            <person name="Winsor B."/>
            <person name="Wolfe K.H."/>
            <person name="Zollner A."/>
            <person name="Zumstein E."/>
            <person name="Kleine K."/>
        </authorList>
    </citation>
    <scope>NUCLEOTIDE SEQUENCE [LARGE SCALE GENOMIC DNA]</scope>
    <source>
        <strain>ATCC 204508 / S288c</strain>
    </source>
</reference>
<reference key="5">
    <citation type="journal article" date="2014" name="G3 (Bethesda)">
        <title>The reference genome sequence of Saccharomyces cerevisiae: Then and now.</title>
        <authorList>
            <person name="Engel S.R."/>
            <person name="Dietrich F.S."/>
            <person name="Fisk D.G."/>
            <person name="Binkley G."/>
            <person name="Balakrishnan R."/>
            <person name="Costanzo M.C."/>
            <person name="Dwight S.S."/>
            <person name="Hitz B.C."/>
            <person name="Karra K."/>
            <person name="Nash R.S."/>
            <person name="Weng S."/>
            <person name="Wong E.D."/>
            <person name="Lloyd P."/>
            <person name="Skrzypek M.S."/>
            <person name="Miyasato S.R."/>
            <person name="Simison M."/>
            <person name="Cherry J.M."/>
        </authorList>
    </citation>
    <scope>GENOME REANNOTATION</scope>
    <source>
        <strain>ATCC 204508 / S288c</strain>
    </source>
</reference>
<reference key="6">
    <citation type="journal article" date="1977" name="Eur. J. Biochem.">
        <title>The primary structure of yeast alcohol dehydrogenase.</title>
        <authorList>
            <person name="Joernvall H."/>
        </authorList>
    </citation>
    <scope>PROTEIN SEQUENCE OF 2-348</scope>
    <scope>ACETYLATION AT SER-2</scope>
    <scope>VARIANT ILE-236</scope>
</reference>
<reference key="7">
    <citation type="journal article" date="1980" name="Nature">
        <title>Isolation of the structural gene for alcohol dehydrogenase by genetic complementation in yeast.</title>
        <authorList>
            <person name="Williamson V.M."/>
            <person name="Bennetzen J.L."/>
            <person name="Young E.T."/>
            <person name="Nasmyth K."/>
            <person name="Hall B.D."/>
        </authorList>
    </citation>
    <scope>NUCLEOTIDE SEQUENCE [GENOMIC DNA] OF 214-333</scope>
    <scope>CATALYTIC ACTIVITY</scope>
    <scope>INDUCTION</scope>
</reference>
<reference key="8">
    <citation type="journal article" date="1994" name="Electrophoresis">
        <title>Protein identifications for a Saccharomyces cerevisiae protein database.</title>
        <authorList>
            <person name="Garrels J.I."/>
            <person name="Futcher B."/>
            <person name="Kobayashi R."/>
            <person name="Latter G.I."/>
            <person name="Schwender B."/>
            <person name="Volpe T."/>
            <person name="Warner J.R."/>
            <person name="McLaughlin C.S."/>
        </authorList>
    </citation>
    <scope>PROTEIN SEQUENCE OF 62-76; 320-332 AND 337-348</scope>
    <source>
        <strain>ATCC 204508 / S288c</strain>
    </source>
</reference>
<reference key="9">
    <citation type="journal article" date="1995" name="Electrophoresis">
        <title>Gene linkage of two-dimensional polyacrylamide gel electrophoresis resolved proteins from isogene families in Saccharomyces cerevisiae by microsequencing of in-gel trypsin generated peptides.</title>
        <authorList>
            <person name="Norbeck J."/>
            <person name="Blomberg A."/>
        </authorList>
    </citation>
    <scope>PROTEIN SEQUENCE OF 9-17; 40-48 AND 304-310</scope>
    <source>
        <strain>ATCC 38531 / Y41</strain>
    </source>
</reference>
<reference key="10">
    <citation type="book" date="1964" name="Structure and activity of enzymes">
        <title>The structure and catalytic activity of thiol dehydrogenases.</title>
        <editorList>
            <person name="Goodwin T.W."/>
            <person name="Harris J.I."/>
            <person name="Hartley B.S."/>
        </editorList>
        <authorList>
            <person name="Harris J.I."/>
        </authorList>
    </citation>
    <scope>SUBUNIT</scope>
</reference>
<reference key="11">
    <citation type="journal article" date="1973" name="Biochem. J.">
        <title>A study of the kinetics and mechanism of yeast alcohol dehydrogenase with a variety of substrates.</title>
        <authorList>
            <person name="Dickinson F.M."/>
            <person name="Monger G.P."/>
        </authorList>
    </citation>
    <scope>CATALYTIC ACTIVITY</scope>
    <scope>BIOPHYSICOCHEMICAL PROPERTIES</scope>
</reference>
<reference key="12">
    <citation type="journal article" date="1975" name="Biochem. J.">
        <title>A study of the pH- and temperature-dependence of the reactions of yeast alcohol dehydrogenase with ethanol, acetaldehyde and butyraldehyde as substrates.</title>
        <authorList>
            <person name="Dickenson C.J."/>
            <person name="Dickinson F.M."/>
        </authorList>
    </citation>
    <scope>CATALYTIC ACTIVITY</scope>
</reference>
<reference key="13">
    <citation type="journal article" date="1975" name="Biochem. J.">
        <title>A study of the oxidation of butan-1-ol and propan-2-ol by nicotinamide-adenine dinucleotide catalysed by yeast alcohol dehydrogenase.</title>
        <authorList>
            <person name="Dickenson C.J."/>
            <person name="Dickinson F.M."/>
        </authorList>
    </citation>
    <scope>CATALYTIC ACTIVITY</scope>
</reference>
<reference key="14">
    <citation type="journal article" date="1986" name="EMBO J.">
        <title>Intracellular sorting of alcohol dehydrogenase isoenzymes in yeast: a cytosolic location reflects absence of an amino-terminal targeting sequence for the mitochondrion.</title>
        <authorList>
            <person name="van Loon A.P."/>
            <person name="Young E.T."/>
        </authorList>
    </citation>
    <scope>SUBCELLULAR LOCATION</scope>
</reference>
<reference key="15">
    <citation type="journal article" date="1987" name="J. Biol. Chem.">
        <title>Kinetic characterization of yeast alcohol dehydrogenases. Amino acid residue 294 and substrate specificity.</title>
        <authorList>
            <person name="Ganzhorn A.J."/>
            <person name="Green D.W."/>
            <person name="Hershey A.D."/>
            <person name="Gould R.M."/>
            <person name="Plapp B.V."/>
        </authorList>
    </citation>
    <scope>FUNCTION</scope>
    <scope>CATALYTIC ACTIVITY</scope>
    <scope>BIOPHYSICOCHEMICAL PROPERTIES</scope>
    <scope>MUTAGENESIS OF MET-271</scope>
</reference>
<reference key="16">
    <citation type="journal article" date="1990" name="Biochemistry">
        <title>Substitution of arginine for histidine-47 in the coenzyme binding site of yeast alcohol dehydrogenase I.</title>
        <authorList>
            <person name="Gould R.M."/>
            <person name="Plapp B.V."/>
        </authorList>
    </citation>
    <scope>CATALYTIC ACTIVITY</scope>
    <scope>BIOPHYSICOCHEMICAL PROPERTIES</scope>
    <scope>MUTAGENESIS OF HIS-45</scope>
</reference>
<reference key="17">
    <citation type="journal article" date="1993" name="J. Biol. Chem.">
        <title>Inversion of the substrate specificity of yeast alcohol dehydrogenase.</title>
        <authorList>
            <person name="Green D.W."/>
            <person name="Sun H.W."/>
            <person name="Plapp B.V."/>
        </authorList>
    </citation>
    <scope>CATALYTIC ACTIVITY</scope>
    <scope>BIOPHYSICOCHEMICAL PROPERTIES</scope>
    <scope>MUTAGENESIS OF THR-46; TRP-55 AND TRP-93</scope>
</reference>
<reference key="18">
    <citation type="journal article" date="2002" name="FEMS Yeast Res.">
        <title>The three zinc-containing alcohol dehydrogenases from baker's yeast, Saccharomyces cerevisiae.</title>
        <authorList>
            <person name="Leskovac V."/>
            <person name="Trivic S."/>
            <person name="Pericin D."/>
        </authorList>
    </citation>
    <scope>REVIEW</scope>
</reference>
<reference key="19">
    <citation type="journal article" date="2003" name="Mol. Cell">
        <title>Assigning function to yeast proteins by integration of technologies.</title>
        <authorList>
            <person name="Hazbun T.R."/>
            <person name="Malmstroem L."/>
            <person name="Anderson S."/>
            <person name="Graczyk B.J."/>
            <person name="Fox B."/>
            <person name="Riffle M."/>
            <person name="Sundin B.A."/>
            <person name="Aranda J.D."/>
            <person name="McDonald W.H."/>
            <person name="Chiu C.-H."/>
            <person name="Snydsman B.E."/>
            <person name="Bradley P."/>
            <person name="Muller E.G.D."/>
            <person name="Fields S."/>
            <person name="Baker D."/>
            <person name="Yates J.R. III"/>
            <person name="Davis T.N."/>
        </authorList>
    </citation>
    <scope>IDENTIFICATION BY MASS SPECTROMETRY</scope>
</reference>
<reference key="20">
    <citation type="journal article" date="2003" name="Yeast">
        <title>Associating protein activities with their genes: rapid identification of a gene encoding a methylglyoxal reductase in the yeast Saccharomyces cerevisiae.</title>
        <authorList>
            <person name="Chen C.N."/>
            <person name="Porubleva L."/>
            <person name="Shearer G."/>
            <person name="Svrakic M."/>
            <person name="Holden L.G."/>
            <person name="Dover J.L."/>
            <person name="Johnston M."/>
            <person name="Chitnis P.R."/>
            <person name="Kohl D.H."/>
        </authorList>
    </citation>
    <scope>CATALYTIC ACTIVITY</scope>
</reference>
<reference key="21">
    <citation type="journal article" date="2005" name="Mol. Cell. Proteomics">
        <title>Quantitative phosphoproteomics applied to the yeast pheromone signaling pathway.</title>
        <authorList>
            <person name="Gruhler A."/>
            <person name="Olsen J.V."/>
            <person name="Mohammed S."/>
            <person name="Mortensen P."/>
            <person name="Faergeman N.J."/>
            <person name="Mann M."/>
            <person name="Jensen O.N."/>
        </authorList>
    </citation>
    <scope>PHOSPHORYLATION [LARGE SCALE ANALYSIS] AT SER-316</scope>
    <scope>IDENTIFICATION BY MASS SPECTROMETRY [LARGE SCALE ANALYSIS]</scope>
    <source>
        <strain>YAL6B</strain>
    </source>
</reference>
<reference key="22">
    <citation type="journal article" date="2007" name="J. Proteome Res.">
        <title>Large-scale phosphorylation analysis of alpha-factor-arrested Saccharomyces cerevisiae.</title>
        <authorList>
            <person name="Li X."/>
            <person name="Gerber S.A."/>
            <person name="Rudner A.D."/>
            <person name="Beausoleil S.A."/>
            <person name="Haas W."/>
            <person name="Villen J."/>
            <person name="Elias J.E."/>
            <person name="Gygi S.P."/>
        </authorList>
    </citation>
    <scope>PHOSPHORYLATION [LARGE SCALE ANALYSIS] AT SER-316</scope>
    <scope>IDENTIFICATION BY MASS SPECTROMETRY [LARGE SCALE ANALYSIS]</scope>
    <source>
        <strain>ADR376</strain>
    </source>
</reference>
<reference key="23">
    <citation type="journal article" date="2007" name="Proc. Natl. Acad. Sci. U.S.A.">
        <title>Analysis of phosphorylation sites on proteins from Saccharomyces cerevisiae by electron transfer dissociation (ETD) mass spectrometry.</title>
        <authorList>
            <person name="Chi A."/>
            <person name="Huttenhower C."/>
            <person name="Geer L.Y."/>
            <person name="Coon J.J."/>
            <person name="Syka J.E.P."/>
            <person name="Bai D.L."/>
            <person name="Shabanowitz J."/>
            <person name="Burke D.J."/>
            <person name="Troyanskaya O.G."/>
            <person name="Hunt D.F."/>
        </authorList>
    </citation>
    <scope>PHOSPHORYLATION [LARGE SCALE ANALYSIS] AT SER-213 AND THR-223</scope>
    <scope>IDENTIFICATION BY MASS SPECTROMETRY [LARGE SCALE ANALYSIS]</scope>
</reference>
<reference key="24">
    <citation type="journal article" date="2008" name="Mol. Cell. Proteomics">
        <title>A multidimensional chromatography technology for in-depth phosphoproteome analysis.</title>
        <authorList>
            <person name="Albuquerque C.P."/>
            <person name="Smolka M.B."/>
            <person name="Payne S.H."/>
            <person name="Bafna V."/>
            <person name="Eng J."/>
            <person name="Zhou H."/>
        </authorList>
    </citation>
    <scope>IDENTIFICATION BY MASS SPECTROMETRY [LARGE SCALE ANALYSIS]</scope>
</reference>
<reference key="25">
    <citation type="journal article" date="2009" name="Science">
        <title>Global analysis of Cdk1 substrate phosphorylation sites provides insights into evolution.</title>
        <authorList>
            <person name="Holt L.J."/>
            <person name="Tuch B.B."/>
            <person name="Villen J."/>
            <person name="Johnson A.D."/>
            <person name="Gygi S.P."/>
            <person name="Morgan D.O."/>
        </authorList>
    </citation>
    <scope>PHOSPHORYLATION [LARGE SCALE ANALYSIS] AT SER-279 AND SER-316</scope>
    <scope>IDENTIFICATION BY MASS SPECTROMETRY [LARGE SCALE ANALYSIS]</scope>
</reference>
<reference key="26">
    <citation type="journal article" date="2012" name="Proteomics">
        <title>Sites of ubiquitin attachment in Saccharomyces cerevisiae.</title>
        <authorList>
            <person name="Starita L.M."/>
            <person name="Lo R.S."/>
            <person name="Eng J.K."/>
            <person name="von Haller P.D."/>
            <person name="Fields S."/>
        </authorList>
    </citation>
    <scope>UBIQUITINATION [LARGE SCALE ANALYSIS] AT LYS-226; LYS-234; LYS-287 AND LYS-319</scope>
    <scope>IDENTIFICATION BY MASS SPECTROMETRY [LARGE SCALE ANALYSIS]</scope>
</reference>
<reference key="27">
    <citation type="journal article" date="2012" name="FEMS Yeast Res.">
        <title>Molecular and physiological aspects of alcohol dehydrogenases in the ethanol metabolism of Saccharomyces cerevisiae.</title>
        <authorList>
            <person name="de Smidt O."/>
            <person name="du Preez J.C."/>
            <person name="Albertyn J."/>
        </authorList>
    </citation>
    <scope>FUNCTION</scope>
</reference>
<reference evidence="21" key="28">
    <citation type="journal article" date="2014" name="Biochemistry">
        <title>Yeast alcohol dehydrogenase structure and catalysis.</title>
        <authorList>
            <person name="Raj S.B."/>
            <person name="Ramaswamy S."/>
            <person name="Plapp B.V."/>
        </authorList>
    </citation>
    <scope>X-RAY CRYSTALLOGRAPHY (2.40 ANGSTROMS) OF 2-348 IN COMPLEX WITH ZN(2+)</scope>
</reference>
<reference evidence="22" key="29">
    <citation type="journal article" date="2016" name="Arch. Biochem. Biophys.">
        <title>Mechanistic implications from structures of yeast alcohol dehydrogenase complexed with coenzyme and an alcohol.</title>
        <authorList>
            <person name="Plapp B.V."/>
            <person name="Charlier H.A. Jr."/>
            <person name="Ramaswamy S."/>
        </authorList>
    </citation>
    <scope>X-RAY CRYSTALLOGRAPHY (3.00 ANGSTROMS) OF 2-348 IN COMPLEX WITH NAD(+) AND ZN(2+)</scope>
</reference>
<reference evidence="23" key="30">
    <citation type="journal article" date="2021" name="Biochemistry">
        <title>Cryo-electron microscopy structures of yeast alcohol dehydrogenase.</title>
        <authorList>
            <person name="Guntupalli S.R."/>
            <person name="Li Z."/>
            <person name="Chang L."/>
            <person name="Plapp B.V."/>
            <person name="Subramanian R."/>
        </authorList>
    </citation>
    <scope>STRUCTURE BY ELECTRON MICROSCOPY (2.77 ANGSTROMS) OF 2-348</scope>
</reference>
<feature type="initiator methionine" description="Removed" evidence="9">
    <location>
        <position position="1"/>
    </location>
</feature>
<feature type="chain" id="PRO_0000160730" description="Alcohol dehydrogenase 1">
    <location>
        <begin position="2"/>
        <end position="348"/>
    </location>
</feature>
<feature type="binding site" evidence="6 7 21 22">
    <location>
        <position position="44"/>
    </location>
    <ligand>
        <name>Zn(2+)</name>
        <dbReference type="ChEBI" id="CHEBI:29105"/>
        <label>1</label>
        <note>catalytic</note>
    </ligand>
</feature>
<feature type="binding site" evidence="7 22">
    <location>
        <position position="45"/>
    </location>
    <ligand>
        <name>NAD(+)</name>
        <dbReference type="ChEBI" id="CHEBI:57540"/>
    </ligand>
</feature>
<feature type="binding site" evidence="7 22">
    <location>
        <position position="46"/>
    </location>
    <ligand>
        <name>NAD(+)</name>
        <dbReference type="ChEBI" id="CHEBI:57540"/>
    </ligand>
</feature>
<feature type="binding site" evidence="7 22">
    <location>
        <position position="49"/>
    </location>
    <ligand>
        <name>NAD(+)</name>
        <dbReference type="ChEBI" id="CHEBI:57540"/>
    </ligand>
</feature>
<feature type="binding site" evidence="6 7 21 22">
    <location>
        <position position="67"/>
    </location>
    <ligand>
        <name>Zn(2+)</name>
        <dbReference type="ChEBI" id="CHEBI:29105"/>
        <label>1</label>
        <note>catalytic</note>
    </ligand>
</feature>
<feature type="binding site" description="in the open conformation" evidence="6 7 21 22">
    <location>
        <position position="68"/>
    </location>
    <ligand>
        <name>Zn(2+)</name>
        <dbReference type="ChEBI" id="CHEBI:29105"/>
        <label>1</label>
        <note>catalytic</note>
    </ligand>
</feature>
<feature type="binding site" evidence="6 7 21 22">
    <location>
        <position position="98"/>
    </location>
    <ligand>
        <name>Zn(2+)</name>
        <dbReference type="ChEBI" id="CHEBI:29105"/>
        <label>2</label>
    </ligand>
</feature>
<feature type="binding site" evidence="6 7 21 22">
    <location>
        <position position="101"/>
    </location>
    <ligand>
        <name>Zn(2+)</name>
        <dbReference type="ChEBI" id="CHEBI:29105"/>
        <label>2</label>
    </ligand>
</feature>
<feature type="binding site" evidence="6 7 21 22">
    <location>
        <position position="104"/>
    </location>
    <ligand>
        <name>Zn(2+)</name>
        <dbReference type="ChEBI" id="CHEBI:29105"/>
        <label>2</label>
    </ligand>
</feature>
<feature type="binding site" evidence="6 7 21 22">
    <location>
        <position position="112"/>
    </location>
    <ligand>
        <name>Zn(2+)</name>
        <dbReference type="ChEBI" id="CHEBI:29105"/>
        <label>2</label>
    </ligand>
</feature>
<feature type="binding site" evidence="6 7 21 22">
    <location>
        <position position="154"/>
    </location>
    <ligand>
        <name>Zn(2+)</name>
        <dbReference type="ChEBI" id="CHEBI:29105"/>
        <label>1</label>
        <note>catalytic</note>
    </ligand>
</feature>
<feature type="binding site" evidence="7 22">
    <location>
        <position position="181"/>
    </location>
    <ligand>
        <name>NAD(+)</name>
        <dbReference type="ChEBI" id="CHEBI:57540"/>
    </ligand>
</feature>
<feature type="binding site" evidence="7 22">
    <location>
        <position position="182"/>
    </location>
    <ligand>
        <name>NAD(+)</name>
        <dbReference type="ChEBI" id="CHEBI:57540"/>
    </ligand>
</feature>
<feature type="binding site" evidence="7 22">
    <location>
        <position position="183"/>
    </location>
    <ligand>
        <name>NAD(+)</name>
        <dbReference type="ChEBI" id="CHEBI:57540"/>
    </ligand>
</feature>
<feature type="binding site" evidence="7 22">
    <location>
        <position position="202"/>
    </location>
    <ligand>
        <name>NAD(+)</name>
        <dbReference type="ChEBI" id="CHEBI:57540"/>
    </ligand>
</feature>
<feature type="binding site" evidence="7 22">
    <location>
        <position position="207"/>
    </location>
    <ligand>
        <name>NAD(+)</name>
        <dbReference type="ChEBI" id="CHEBI:57540"/>
    </ligand>
</feature>
<feature type="binding site" evidence="7 22">
    <location>
        <position position="222"/>
    </location>
    <ligand>
        <name>NAD(+)</name>
        <dbReference type="ChEBI" id="CHEBI:57540"/>
    </ligand>
</feature>
<feature type="binding site" evidence="7 22">
    <location>
        <position position="269"/>
    </location>
    <ligand>
        <name>NAD(+)</name>
        <dbReference type="ChEBI" id="CHEBI:57540"/>
    </ligand>
</feature>
<feature type="binding site" evidence="7 22">
    <location>
        <position position="271"/>
    </location>
    <ligand>
        <name>NAD(+)</name>
        <dbReference type="ChEBI" id="CHEBI:57540"/>
    </ligand>
</feature>
<feature type="binding site" evidence="7 22">
    <location>
        <position position="294"/>
    </location>
    <ligand>
        <name>NAD(+)</name>
        <dbReference type="ChEBI" id="CHEBI:57540"/>
    </ligand>
</feature>
<feature type="binding site" evidence="7 22">
    <location>
        <position position="296"/>
    </location>
    <ligand>
        <name>NAD(+)</name>
        <dbReference type="ChEBI" id="CHEBI:57540"/>
    </ligand>
</feature>
<feature type="binding site" evidence="7 22">
    <location>
        <position position="341"/>
    </location>
    <ligand>
        <name>NAD(+)</name>
        <dbReference type="ChEBI" id="CHEBI:57540"/>
    </ligand>
</feature>
<feature type="modified residue" description="N-acetylserine" evidence="9">
    <location>
        <position position="2"/>
    </location>
</feature>
<feature type="modified residue" description="Phosphoserine" evidence="25">
    <location>
        <position position="213"/>
    </location>
</feature>
<feature type="modified residue" description="Phosphothreonine" evidence="25">
    <location>
        <position position="223"/>
    </location>
</feature>
<feature type="modified residue" description="Phosphoserine" evidence="27">
    <location>
        <position position="279"/>
    </location>
</feature>
<feature type="modified residue" description="Phosphoserine" evidence="24 26 27">
    <location>
        <position position="316"/>
    </location>
</feature>
<feature type="cross-link" description="Glycyl lysine isopeptide (Lys-Gly) (interchain with G-Cter in ubiquitin)" evidence="28">
    <location>
        <position position="226"/>
    </location>
</feature>
<feature type="cross-link" description="Glycyl lysine isopeptide (Lys-Gly) (interchain with G-Cter in ubiquitin)" evidence="28">
    <location>
        <position position="234"/>
    </location>
</feature>
<feature type="cross-link" description="Glycyl lysine isopeptide (Lys-Gly) (interchain with G-Cter in ubiquitin)" evidence="28">
    <location>
        <position position="287"/>
    </location>
</feature>
<feature type="cross-link" description="Glycyl lysine isopeptide (Lys-Gly) (interchain with G-Cter in ubiquitin)" evidence="28">
    <location>
        <position position="319"/>
    </location>
</feature>
<feature type="sequence variant" evidence="9">
    <original>T</original>
    <variation>I</variation>
    <location>
        <position position="236"/>
    </location>
</feature>
<feature type="mutagenesis site" description="Decreases dissociation constants by 4-fold for NAD(+) and 2-fold for NADH, while turnover numbers were decreased by 4-fold for ethanol oxidation and 6-fold for acetaldehyde reduction." evidence="3">
    <original>H</original>
    <variation>R</variation>
    <location>
        <position position="45"/>
    </location>
</feature>
<feature type="mutagenesis site" description="Has the same pattern of activity as the wild-type enzyme for linear primary alcohols." evidence="13">
    <original>T</original>
    <variation>S</variation>
    <location>
        <position position="46"/>
    </location>
</feature>
<feature type="mutagenesis site" description="Has lowered reactivity with primary and secondary alcohols." evidence="13">
    <original>W</original>
    <variation>M</variation>
    <location>
        <position position="55"/>
    </location>
</feature>
<feature type="mutagenesis site" description="Has an inverted specificity pattern for primary alcohols, being 3- and 10-fold more active on hexanol and 350- and 540-fold less active on ethanol. Also acquires weak activity on branched chain alcohols and cyclohexanol." evidence="13">
    <original>W</original>
    <variation>A</variation>
    <location>
        <position position="93"/>
    </location>
</feature>
<feature type="mutagenesis site" description="Produces a 7 to 10-fold increase in reactivity with butanol, pentanol, and hexanol." evidence="10">
    <original>M</original>
    <variation>L</variation>
    <location>
        <position position="271"/>
    </location>
</feature>
<feature type="sequence conflict" description="In Ref. 1; CAA24601 and 2; AAA34410." evidence="16" ref="1 2">
    <original>Y</original>
    <variation>H</variation>
    <location>
        <position position="21"/>
    </location>
</feature>
<feature type="sequence conflict" description="In Ref. 6; AA sequence." evidence="16" ref="6">
    <original>V</original>
    <variation>T</variation>
    <location>
        <position position="59"/>
    </location>
</feature>
<feature type="sequence conflict" description="In Ref. 6; AA sequence." evidence="16" ref="6">
    <original>Q</original>
    <variation>E</variation>
    <location>
        <position position="148"/>
    </location>
</feature>
<feature type="sequence conflict" description="In Ref. 6; AA sequence." evidence="16" ref="6">
    <original>I</original>
    <variation>V</variation>
    <location>
        <position position="152"/>
    </location>
</feature>
<feature type="sequence conflict" description="In Ref. 6; AA sequence." evidence="16" ref="6">
    <original>D</original>
    <variation>N</variation>
    <location>
        <position position="237"/>
    </location>
</feature>
<feature type="sequence conflict" description="In Ref. 6; AA sequence." evidence="16" ref="6">
    <original>V</original>
    <variation>I</variation>
    <location>
        <position position="314"/>
    </location>
</feature>
<feature type="sequence conflict" description="In Ref. 6; AA sequence." evidence="16" ref="6">
    <original>I</original>
    <variation>V</variation>
    <location>
        <position position="338"/>
    </location>
</feature>
<feature type="strand" evidence="29">
    <location>
        <begin position="5"/>
        <end position="14"/>
    </location>
</feature>
<feature type="strand" evidence="29">
    <location>
        <begin position="20"/>
        <end position="25"/>
    </location>
</feature>
<feature type="strand" evidence="29">
    <location>
        <begin position="33"/>
        <end position="42"/>
    </location>
</feature>
<feature type="helix" evidence="29">
    <location>
        <begin position="45"/>
        <end position="52"/>
    </location>
</feature>
<feature type="strand" evidence="29">
    <location>
        <begin position="55"/>
        <end position="57"/>
    </location>
</feature>
<feature type="strand" evidence="29">
    <location>
        <begin position="61"/>
        <end position="64"/>
    </location>
</feature>
<feature type="strand" evidence="29">
    <location>
        <begin position="68"/>
        <end position="76"/>
    </location>
</feature>
<feature type="strand" evidence="29">
    <location>
        <begin position="88"/>
        <end position="91"/>
    </location>
</feature>
<feature type="strand" evidence="29">
    <location>
        <begin position="93"/>
        <end position="96"/>
    </location>
</feature>
<feature type="strand" evidence="29">
    <location>
        <begin position="99"/>
        <end position="101"/>
    </location>
</feature>
<feature type="helix" evidence="29">
    <location>
        <begin position="102"/>
        <end position="105"/>
    </location>
</feature>
<feature type="helix" evidence="29">
    <location>
        <begin position="109"/>
        <end position="111"/>
    </location>
</feature>
<feature type="strand" evidence="29">
    <location>
        <begin position="116"/>
        <end position="118"/>
    </location>
</feature>
<feature type="turn" evidence="29">
    <location>
        <begin position="119"/>
        <end position="121"/>
    </location>
</feature>
<feature type="strand" evidence="29">
    <location>
        <begin position="125"/>
        <end position="133"/>
    </location>
</feature>
<feature type="turn" evidence="29">
    <location>
        <begin position="134"/>
        <end position="136"/>
    </location>
</feature>
<feature type="strand" evidence="29">
    <location>
        <begin position="137"/>
        <end position="140"/>
    </location>
</feature>
<feature type="helix" evidence="29">
    <location>
        <begin position="146"/>
        <end position="149"/>
    </location>
</feature>
<feature type="helix" evidence="29">
    <location>
        <begin position="150"/>
        <end position="153"/>
    </location>
</feature>
<feature type="helix" evidence="29">
    <location>
        <begin position="155"/>
        <end position="164"/>
    </location>
</feature>
<feature type="strand" evidence="29">
    <location>
        <begin position="173"/>
        <end position="177"/>
    </location>
</feature>
<feature type="turn" evidence="29">
    <location>
        <begin position="178"/>
        <end position="180"/>
    </location>
</feature>
<feature type="helix" evidence="29">
    <location>
        <begin position="184"/>
        <end position="194"/>
    </location>
</feature>
<feature type="strand" evidence="29">
    <location>
        <begin position="197"/>
        <end position="202"/>
    </location>
</feature>
<feature type="strand" evidence="30">
    <location>
        <begin position="204"/>
        <end position="206"/>
    </location>
</feature>
<feature type="helix" evidence="29">
    <location>
        <begin position="207"/>
        <end position="213"/>
    </location>
</feature>
<feature type="strand" evidence="29">
    <location>
        <begin position="218"/>
        <end position="221"/>
    </location>
</feature>
<feature type="turn" evidence="29">
    <location>
        <begin position="222"/>
        <end position="224"/>
    </location>
</feature>
<feature type="helix" evidence="29">
    <location>
        <begin position="228"/>
        <end position="235"/>
    </location>
</feature>
<feature type="strand" evidence="29">
    <location>
        <begin position="240"/>
        <end position="245"/>
    </location>
</feature>
<feature type="helix" evidence="29">
    <location>
        <begin position="250"/>
        <end position="259"/>
    </location>
</feature>
<feature type="strand" evidence="29">
    <location>
        <begin position="260"/>
        <end position="268"/>
    </location>
</feature>
<feature type="strand" evidence="29">
    <location>
        <begin position="276"/>
        <end position="280"/>
    </location>
</feature>
<feature type="helix" evidence="29">
    <location>
        <begin position="281"/>
        <end position="286"/>
    </location>
</feature>
<feature type="strand" evidence="29">
    <location>
        <begin position="290"/>
        <end position="293"/>
    </location>
</feature>
<feature type="helix" evidence="29">
    <location>
        <begin position="299"/>
        <end position="310"/>
    </location>
</feature>
<feature type="strand" evidence="29">
    <location>
        <begin position="318"/>
        <end position="322"/>
    </location>
</feature>
<feature type="helix" evidence="29">
    <location>
        <begin position="323"/>
        <end position="325"/>
    </location>
</feature>
<feature type="helix" evidence="29">
    <location>
        <begin position="326"/>
        <end position="334"/>
    </location>
</feature>
<feature type="strand" evidence="29">
    <location>
        <begin position="339"/>
        <end position="346"/>
    </location>
</feature>
<keyword id="KW-0002">3D-structure</keyword>
<keyword id="KW-0007">Acetylation</keyword>
<keyword id="KW-0963">Cytoplasm</keyword>
<keyword id="KW-0903">Direct protein sequencing</keyword>
<keyword id="KW-1017">Isopeptide bond</keyword>
<keyword id="KW-0479">Metal-binding</keyword>
<keyword id="KW-0520">NAD</keyword>
<keyword id="KW-0560">Oxidoreductase</keyword>
<keyword id="KW-0597">Phosphoprotein</keyword>
<keyword id="KW-1185">Reference proteome</keyword>
<keyword id="KW-0832">Ubl conjugation</keyword>
<keyword id="KW-0862">Zinc</keyword>
<proteinExistence type="evidence at protein level"/>
<comment type="function">
    <text evidence="4 13 17">Preferentially fermentative isozyme that reduces acetaldehyde to ethanol during the fermentation of glucose. Major enzyme required for the conversion of acetaldehyde to ethanol (Probable) (PubMed:22094012). Plays a key role in the carbohydrate metabolism through the regeneration of NAD(+) from glycolytic NADH (Probable). In the reverse reaction, preferentially catalyzes the conversion of primary unbranched alcohols to their corresponding aldehydes. Also shows activity toward secondary alcohols (Probable). Most active with ethanol, and its activity decreases as the size of the alcohol is increased (PubMed:8463307).</text>
</comment>
<comment type="catalytic activity">
    <reaction evidence="17">
        <text>a primary alcohol + NAD(+) = an aldehyde + NADH + H(+)</text>
        <dbReference type="Rhea" id="RHEA:10736"/>
        <dbReference type="ChEBI" id="CHEBI:15378"/>
        <dbReference type="ChEBI" id="CHEBI:15734"/>
        <dbReference type="ChEBI" id="CHEBI:17478"/>
        <dbReference type="ChEBI" id="CHEBI:57540"/>
        <dbReference type="ChEBI" id="CHEBI:57945"/>
        <dbReference type="EC" id="1.1.1.1"/>
    </reaction>
</comment>
<comment type="catalytic activity">
    <reaction evidence="12 17">
        <text>a secondary alcohol + NAD(+) = a ketone + NADH + H(+)</text>
        <dbReference type="Rhea" id="RHEA:10740"/>
        <dbReference type="ChEBI" id="CHEBI:15378"/>
        <dbReference type="ChEBI" id="CHEBI:17087"/>
        <dbReference type="ChEBI" id="CHEBI:35681"/>
        <dbReference type="ChEBI" id="CHEBI:57540"/>
        <dbReference type="ChEBI" id="CHEBI:57945"/>
        <dbReference type="EC" id="1.1.1.1"/>
    </reaction>
    <physiologicalReaction direction="left-to-right" evidence="19">
        <dbReference type="Rhea" id="RHEA:10741"/>
    </physiologicalReaction>
</comment>
<comment type="catalytic activity">
    <reaction evidence="5 10 11 12">
        <text>ethanol + NAD(+) = acetaldehyde + NADH + H(+)</text>
        <dbReference type="Rhea" id="RHEA:25290"/>
        <dbReference type="ChEBI" id="CHEBI:15343"/>
        <dbReference type="ChEBI" id="CHEBI:15378"/>
        <dbReference type="ChEBI" id="CHEBI:16236"/>
        <dbReference type="ChEBI" id="CHEBI:57540"/>
        <dbReference type="ChEBI" id="CHEBI:57945"/>
        <dbReference type="EC" id="1.1.1.1"/>
    </reaction>
    <physiologicalReaction direction="left-to-right" evidence="5 10 11">
        <dbReference type="Rhea" id="RHEA:25291"/>
    </physiologicalReaction>
    <physiologicalReaction direction="right-to-left" evidence="5 10 11 12">
        <dbReference type="Rhea" id="RHEA:25292"/>
    </physiologicalReaction>
</comment>
<comment type="catalytic activity">
    <reaction evidence="19">
        <text>allyl alcohol + NADP(+) = acrolein + NADPH + H(+)</text>
        <dbReference type="Rhea" id="RHEA:12168"/>
        <dbReference type="ChEBI" id="CHEBI:15368"/>
        <dbReference type="ChEBI" id="CHEBI:15378"/>
        <dbReference type="ChEBI" id="CHEBI:16605"/>
        <dbReference type="ChEBI" id="CHEBI:57783"/>
        <dbReference type="ChEBI" id="CHEBI:58349"/>
        <dbReference type="EC" id="1.1.1.54"/>
    </reaction>
    <physiologicalReaction direction="left-to-right" evidence="19">
        <dbReference type="Rhea" id="RHEA:12169"/>
    </physiologicalReaction>
</comment>
<comment type="catalytic activity">
    <reaction evidence="2 10 11">
        <text>1-propanol + NAD(+) = propanal + NADH + H(+)</text>
        <dbReference type="Rhea" id="RHEA:50704"/>
        <dbReference type="ChEBI" id="CHEBI:15378"/>
        <dbReference type="ChEBI" id="CHEBI:17153"/>
        <dbReference type="ChEBI" id="CHEBI:28831"/>
        <dbReference type="ChEBI" id="CHEBI:57540"/>
        <dbReference type="ChEBI" id="CHEBI:57945"/>
    </reaction>
    <physiologicalReaction direction="left-to-right" evidence="2 10 11">
        <dbReference type="Rhea" id="RHEA:50705"/>
    </physiologicalReaction>
</comment>
<comment type="catalytic activity">
    <reaction evidence="2 10 11">
        <text>butan-1-ol + NAD(+) = butanal + NADH + H(+)</text>
        <dbReference type="Rhea" id="RHEA:33199"/>
        <dbReference type="ChEBI" id="CHEBI:15378"/>
        <dbReference type="ChEBI" id="CHEBI:15743"/>
        <dbReference type="ChEBI" id="CHEBI:28885"/>
        <dbReference type="ChEBI" id="CHEBI:57540"/>
        <dbReference type="ChEBI" id="CHEBI:57945"/>
    </reaction>
    <physiologicalReaction direction="left-to-right" evidence="2 10 11">
        <dbReference type="Rhea" id="RHEA:33200"/>
    </physiologicalReaction>
    <physiologicalReaction direction="right-to-left" evidence="5 11">
        <dbReference type="Rhea" id="RHEA:33201"/>
    </physiologicalReaction>
</comment>
<comment type="catalytic activity">
    <reaction evidence="10">
        <text>hexan-1-ol + NAD(+) = hexanal + NADH + H(+)</text>
        <dbReference type="Rhea" id="RHEA:60972"/>
        <dbReference type="ChEBI" id="CHEBI:15378"/>
        <dbReference type="ChEBI" id="CHEBI:57540"/>
        <dbReference type="ChEBI" id="CHEBI:57945"/>
        <dbReference type="ChEBI" id="CHEBI:87393"/>
        <dbReference type="ChEBI" id="CHEBI:88528"/>
    </reaction>
    <physiologicalReaction direction="left-to-right" evidence="10">
        <dbReference type="Rhea" id="RHEA:60973"/>
    </physiologicalReaction>
</comment>
<comment type="catalytic activity">
    <reaction evidence="1">
        <text>(R)-lactaldehyde + NAD(+) = methylglyoxal + NADH + H(+)</text>
        <dbReference type="Rhea" id="RHEA:24528"/>
        <dbReference type="ChEBI" id="CHEBI:15378"/>
        <dbReference type="ChEBI" id="CHEBI:17158"/>
        <dbReference type="ChEBI" id="CHEBI:17167"/>
        <dbReference type="ChEBI" id="CHEBI:57540"/>
        <dbReference type="ChEBI" id="CHEBI:57945"/>
        <dbReference type="EC" id="1.1.1.78"/>
    </reaction>
</comment>
<comment type="catalytic activity">
    <reaction evidence="13">
        <text>octan-1-ol + NAD(+) = octanal + NADH + H(+)</text>
        <dbReference type="Rhea" id="RHEA:24620"/>
        <dbReference type="ChEBI" id="CHEBI:15378"/>
        <dbReference type="ChEBI" id="CHEBI:16188"/>
        <dbReference type="ChEBI" id="CHEBI:17935"/>
        <dbReference type="ChEBI" id="CHEBI:57540"/>
        <dbReference type="ChEBI" id="CHEBI:57945"/>
    </reaction>
    <physiologicalReaction direction="left-to-right" evidence="13">
        <dbReference type="Rhea" id="RHEA:24621"/>
    </physiologicalReaction>
</comment>
<comment type="catalytic activity">
    <reaction evidence="13">
        <text>butan-2-ol + NAD(+) = butan-2-one + NADH + H(+)</text>
        <dbReference type="Rhea" id="RHEA:64560"/>
        <dbReference type="ChEBI" id="CHEBI:15378"/>
        <dbReference type="ChEBI" id="CHEBI:28398"/>
        <dbReference type="ChEBI" id="CHEBI:35687"/>
        <dbReference type="ChEBI" id="CHEBI:57540"/>
        <dbReference type="ChEBI" id="CHEBI:57945"/>
    </reaction>
    <physiologicalReaction direction="left-to-right" evidence="13">
        <dbReference type="Rhea" id="RHEA:64561"/>
    </physiologicalReaction>
</comment>
<comment type="catalytic activity">
    <reaction evidence="2 11 13">
        <text>propan-2-ol + NAD(+) = acetone + NADH + H(+)</text>
        <dbReference type="Rhea" id="RHEA:41984"/>
        <dbReference type="ChEBI" id="CHEBI:15347"/>
        <dbReference type="ChEBI" id="CHEBI:15378"/>
        <dbReference type="ChEBI" id="CHEBI:17824"/>
        <dbReference type="ChEBI" id="CHEBI:57540"/>
        <dbReference type="ChEBI" id="CHEBI:57945"/>
    </reaction>
    <physiologicalReaction direction="left-to-right" evidence="2 11 13">
        <dbReference type="Rhea" id="RHEA:41985"/>
    </physiologicalReaction>
</comment>
<comment type="catalytic activity">
    <reaction evidence="13">
        <text>isobutanol + NAD(+) = 2-methylpropanal + NADH + H(+)</text>
        <dbReference type="Rhea" id="RHEA:64692"/>
        <dbReference type="ChEBI" id="CHEBI:15378"/>
        <dbReference type="ChEBI" id="CHEBI:46645"/>
        <dbReference type="ChEBI" id="CHEBI:48943"/>
        <dbReference type="ChEBI" id="CHEBI:57540"/>
        <dbReference type="ChEBI" id="CHEBI:57945"/>
    </reaction>
    <physiologicalReaction direction="left-to-right" evidence="13">
        <dbReference type="Rhea" id="RHEA:64693"/>
    </physiologicalReaction>
</comment>
<comment type="cofactor">
    <cofactor evidence="6 7">
        <name>Zn(2+)</name>
        <dbReference type="ChEBI" id="CHEBI:29105"/>
    </cofactor>
    <text evidence="6 7">Binds 2 Zn(2+) ions per subunit.</text>
</comment>
<comment type="biophysicochemical properties">
    <kinetics>
        <KM evidence="3 10">160 uM for NAD(+)</KM>
        <KM evidence="3 10 11">21 mM for ethanol</KM>
        <KM evidence="3 10 11">0.74 mM for acetaldehyde</KM>
        <KM evidence="3 10 11">94 uM for NADH</KM>
        <KM evidence="10 11">27 mM for 1-propanol</KM>
        <KM evidence="10 11">55 mM for butan-1-ol</KM>
        <KM evidence="11">27.5 mM for butanal</KM>
        <KM evidence="10">37 mM for pentan-1-ol</KM>
        <KM evidence="10">9.5 mM for hexan-1-ol</KM>
        <KM evidence="13">7.8 mM for heptan-1-ol</KM>
        <KM evidence="13">5.3 mM for octan-1-ol</KM>
        <KM evidence="13">1.7 mM for nonan-1-ol</KM>
        <KM evidence="11 13">190 mM for 2-propanol</KM>
        <KM evidence="13">61 mM for (R)-2-butanol</KM>
        <KM evidence="13">55 mM for (S)-2-butanol</KM>
        <KM evidence="13">25 mM for isobutanol</KM>
    </kinetics>
</comment>
<comment type="subunit">
    <text evidence="20">Homotetramer.</text>
</comment>
<comment type="interaction">
    <interactant intactId="EBI-2218">
        <id>P00330</id>
    </interactant>
    <interactant intactId="EBI-2218">
        <id>P00330</id>
        <label>ADH1</label>
    </interactant>
    <organismsDiffer>false</organismsDiffer>
    <experiments>2</experiments>
</comment>
<comment type="interaction">
    <interactant intactId="EBI-2218">
        <id>P00330</id>
    </interactant>
    <interactant intactId="EBI-2464632">
        <id>P34230</id>
        <label>PXA2</label>
    </interactant>
    <organismsDiffer>false</organismsDiffer>
    <experiments>2</experiments>
</comment>
<comment type="interaction">
    <interactant intactId="EBI-2218">
        <id>P00330</id>
    </interactant>
    <interactant intactId="EBI-21779">
        <id>P39109</id>
        <label>YCF1</label>
    </interactant>
    <organismsDiffer>false</organismsDiffer>
    <experiments>2</experiments>
</comment>
<comment type="subcellular location">
    <subcellularLocation>
        <location evidence="8">Cytoplasm</location>
    </subcellularLocation>
</comment>
<comment type="induction">
    <text evidence="19">Expressed in the presence of glucose.</text>
</comment>
<comment type="miscellaneous">
    <text evidence="18">PubMed:320000 sequence has several conflicting residues and reports microheterogeneities at additional postitions. Analysis of the sequence suggests that the sequenced protein was a mixture of at least 3 of the different isoforms of alcohol dehydrogenases found in yeast.</text>
</comment>
<comment type="similarity">
    <text evidence="16">Belongs to the zinc-containing alcohol dehydrogenase family.</text>
</comment>
<protein>
    <recommendedName>
        <fullName evidence="16">Alcohol dehydrogenase 1</fullName>
        <ecNumber evidence="12">1.1.1.1</ecNumber>
        <ecNumber evidence="19">1.1.1.54</ecNumber>
        <ecNumber evidence="1">1.1.1.78</ecNumber>
    </recommendedName>
    <alternativeName>
        <fullName>Alcohol dehydrogenase I</fullName>
        <shortName>ADHI</shortName>
    </alternativeName>
    <alternativeName>
        <fullName evidence="14">NADH-dependent methylglyoxal reductase</fullName>
    </alternativeName>
    <alternativeName>
        <fullName>YADH-1</fullName>
    </alternativeName>
</protein>
<accession>P00330</accession>
<accession>D6W1Y3</accession>
<gene>
    <name type="primary">ADH1</name>
    <name evidence="15" type="synonym">ADC1</name>
    <name type="ordered locus">YOL086C</name>
    <name type="ORF">O0947</name>
</gene>
<organism>
    <name type="scientific">Saccharomyces cerevisiae (strain ATCC 204508 / S288c)</name>
    <name type="common">Baker's yeast</name>
    <dbReference type="NCBI Taxonomy" id="559292"/>
    <lineage>
        <taxon>Eukaryota</taxon>
        <taxon>Fungi</taxon>
        <taxon>Dikarya</taxon>
        <taxon>Ascomycota</taxon>
        <taxon>Saccharomycotina</taxon>
        <taxon>Saccharomycetes</taxon>
        <taxon>Saccharomycetales</taxon>
        <taxon>Saccharomycetaceae</taxon>
        <taxon>Saccharomyces</taxon>
    </lineage>
</organism>
<evidence type="ECO:0000269" key="1">
    <source>
    </source>
</evidence>
<evidence type="ECO:0000269" key="2">
    <source>
    </source>
</evidence>
<evidence type="ECO:0000269" key="3">
    <source>
    </source>
</evidence>
<evidence type="ECO:0000269" key="4">
    <source>
    </source>
</evidence>
<evidence type="ECO:0000269" key="5">
    <source>
    </source>
</evidence>
<evidence type="ECO:0000269" key="6">
    <source>
    </source>
</evidence>
<evidence type="ECO:0000269" key="7">
    <source>
    </source>
</evidence>
<evidence type="ECO:0000269" key="8">
    <source>
    </source>
</evidence>
<evidence type="ECO:0000269" key="9">
    <source>
    </source>
</evidence>
<evidence type="ECO:0000269" key="10">
    <source>
    </source>
</evidence>
<evidence type="ECO:0000269" key="11">
    <source>
    </source>
</evidence>
<evidence type="ECO:0000269" key="12">
    <source>
    </source>
</evidence>
<evidence type="ECO:0000269" key="13">
    <source>
    </source>
</evidence>
<evidence type="ECO:0000303" key="14">
    <source>
    </source>
</evidence>
<evidence type="ECO:0000303" key="15">
    <source>
    </source>
</evidence>
<evidence type="ECO:0000305" key="16"/>
<evidence type="ECO:0000305" key="17">
    <source>
    </source>
</evidence>
<evidence type="ECO:0000305" key="18">
    <source>
    </source>
</evidence>
<evidence type="ECO:0000305" key="19">
    <source>
    </source>
</evidence>
<evidence type="ECO:0000305" key="20">
    <source ref="10"/>
</evidence>
<evidence type="ECO:0007744" key="21">
    <source>
        <dbReference type="PDB" id="4W6Z"/>
    </source>
</evidence>
<evidence type="ECO:0007744" key="22">
    <source>
        <dbReference type="PDB" id="5ENV"/>
    </source>
</evidence>
<evidence type="ECO:0007744" key="23">
    <source>
        <dbReference type="PDB" id="7KCB"/>
    </source>
</evidence>
<evidence type="ECO:0007744" key="24">
    <source>
    </source>
</evidence>
<evidence type="ECO:0007744" key="25">
    <source>
    </source>
</evidence>
<evidence type="ECO:0007744" key="26">
    <source>
    </source>
</evidence>
<evidence type="ECO:0007744" key="27">
    <source>
    </source>
</evidence>
<evidence type="ECO:0007744" key="28">
    <source>
    </source>
</evidence>
<evidence type="ECO:0007829" key="29">
    <source>
        <dbReference type="PDB" id="4W6Z"/>
    </source>
</evidence>
<evidence type="ECO:0007829" key="30">
    <source>
        <dbReference type="PDB" id="7NTM"/>
    </source>
</evidence>